<feature type="chain" id="PRO_0000207962" description="Protein PsbN">
    <location>
        <begin position="1"/>
        <end position="43"/>
    </location>
</feature>
<feature type="transmembrane region" description="Helical" evidence="1">
    <location>
        <begin position="7"/>
        <end position="27"/>
    </location>
</feature>
<accession>Q7YNT5</accession>
<evidence type="ECO:0000255" key="1">
    <source>
        <dbReference type="HAMAP-Rule" id="MF_00293"/>
    </source>
</evidence>
<comment type="function">
    <text evidence="1">May play a role in photosystem I and II biogenesis.</text>
</comment>
<comment type="subcellular location">
    <subcellularLocation>
        <location evidence="1">Plastid</location>
        <location evidence="1">Chloroplast thylakoid membrane</location>
        <topology evidence="1">Single-pass membrane protein</topology>
    </subcellularLocation>
</comment>
<comment type="similarity">
    <text evidence="1">Belongs to the PsbN family.</text>
</comment>
<comment type="caution">
    <text evidence="1">Originally thought to be a component of PSII; based on experiments in Synechocystis, N.tabacum and barley, and its absence from PSII in T.elongatus and T.vulcanus, this is probably not true.</text>
</comment>
<gene>
    <name evidence="1" type="primary">psbN</name>
</gene>
<protein>
    <recommendedName>
        <fullName evidence="1">Protein PsbN</fullName>
    </recommendedName>
</protein>
<proteinExistence type="inferred from homology"/>
<reference key="1">
    <citation type="submission" date="2002-11" db="EMBL/GenBank/DDBJ databases">
        <title>Molecular phylogeny of Suaedeae.</title>
        <authorList>
            <person name="Schuetze P."/>
            <person name="Freitag H."/>
            <person name="Weising K."/>
        </authorList>
    </citation>
    <scope>NUCLEOTIDE SEQUENCE [GENOMIC DNA]</scope>
</reference>
<sequence length="43" mass="4736">METATLIAIFISGLLVSFTGYALYTAFGQPSQQLRDPFEEHGD</sequence>
<geneLocation type="chloroplast"/>
<organism>
    <name type="scientific">Suaeda maritima</name>
    <name type="common">Annual sea blite</name>
    <name type="synonym">Suaeda spicata</name>
    <dbReference type="NCBI Taxonomy" id="126913"/>
    <lineage>
        <taxon>Eukaryota</taxon>
        <taxon>Viridiplantae</taxon>
        <taxon>Streptophyta</taxon>
        <taxon>Embryophyta</taxon>
        <taxon>Tracheophyta</taxon>
        <taxon>Spermatophyta</taxon>
        <taxon>Magnoliopsida</taxon>
        <taxon>eudicotyledons</taxon>
        <taxon>Gunneridae</taxon>
        <taxon>Pentapetalae</taxon>
        <taxon>Caryophyllales</taxon>
        <taxon>Chenopodiaceae</taxon>
        <taxon>Suaedoideae</taxon>
        <taxon>Suaeda</taxon>
    </lineage>
</organism>
<name>PSBN_SUAMA</name>
<dbReference type="EMBL" id="AY181883">
    <property type="protein sequence ID" value="AAO66008.1"/>
    <property type="molecule type" value="Genomic_DNA"/>
</dbReference>
<dbReference type="SMR" id="Q7YNT5"/>
<dbReference type="GO" id="GO:0009535">
    <property type="term" value="C:chloroplast thylakoid membrane"/>
    <property type="evidence" value="ECO:0007669"/>
    <property type="project" value="UniProtKB-SubCell"/>
</dbReference>
<dbReference type="GO" id="GO:0015979">
    <property type="term" value="P:photosynthesis"/>
    <property type="evidence" value="ECO:0007669"/>
    <property type="project" value="InterPro"/>
</dbReference>
<dbReference type="HAMAP" id="MF_00293">
    <property type="entry name" value="PSII_PsbN"/>
    <property type="match status" value="1"/>
</dbReference>
<dbReference type="InterPro" id="IPR003398">
    <property type="entry name" value="PSII_PsbN"/>
</dbReference>
<dbReference type="PANTHER" id="PTHR35326">
    <property type="entry name" value="PROTEIN PSBN"/>
    <property type="match status" value="1"/>
</dbReference>
<dbReference type="PANTHER" id="PTHR35326:SF3">
    <property type="entry name" value="PROTEIN PSBN"/>
    <property type="match status" value="1"/>
</dbReference>
<dbReference type="Pfam" id="PF02468">
    <property type="entry name" value="PsbN"/>
    <property type="match status" value="1"/>
</dbReference>
<keyword id="KW-0150">Chloroplast</keyword>
<keyword id="KW-0472">Membrane</keyword>
<keyword id="KW-0934">Plastid</keyword>
<keyword id="KW-0793">Thylakoid</keyword>
<keyword id="KW-0812">Transmembrane</keyword>
<keyword id="KW-1133">Transmembrane helix</keyword>